<sequence length="473" mass="52799">MSAKTYNAGVKEYRHTYWEPHYNVQDTDILACFKIVPQPGVDREEAAAAVAAESSTGTWTTVWTDLLTDLDYYKGRSYRIEDVPGDDSSFYAFIAYPIDLFEEGSVVNVLTSLTGNVFGFKAVRSLRLEDVRFPIAYVKTCGGPPNGIQVERDILNKYGRAYLGCTIKPKLGLSAKNYGRAVYECLRGGLDFTKDDENVNSQPFMRWRQRFDFVMEAIHKAERETGERKGHYLNVTAPTPEEMFKRAEYAKELKAPIIMHDYIAGGFCANTGLANWCRDNGILLHIHRAMHAVIDRNPHHGIHFRVLAKMLRLSGGDHLHSGTVVGKLEGDREATLGWIDIMRDSFIKEDRSRGIMFDQDWGSMPGVVPVASGGIHVWHMPALVTIFGDDACLQFGGGTLGHPWGNAAGAAANRVALEACVEARNRGVPIEKEGKAILTEAAKHSPELKIAMETWKEIKFEFDTVDKLDVAHK</sequence>
<name>RBL_NITEU</name>
<evidence type="ECO:0000255" key="1">
    <source>
        <dbReference type="HAMAP-Rule" id="MF_01338"/>
    </source>
</evidence>
<gene>
    <name evidence="1" type="primary">cbbL</name>
    <name evidence="1" type="synonym">rbcL</name>
    <name type="ordered locus">NE1921</name>
</gene>
<feature type="chain" id="PRO_0000062629" description="Ribulose bisphosphate carboxylase large chain">
    <location>
        <begin position="1"/>
        <end position="473"/>
    </location>
</feature>
<feature type="active site" description="Proton acceptor" evidence="1">
    <location>
        <position position="168"/>
    </location>
</feature>
<feature type="active site" description="Proton acceptor" evidence="1">
    <location>
        <position position="287"/>
    </location>
</feature>
<feature type="binding site" description="in homodimeric partner" evidence="1">
    <location>
        <position position="116"/>
    </location>
    <ligand>
        <name>substrate</name>
    </ligand>
</feature>
<feature type="binding site" evidence="1">
    <location>
        <position position="166"/>
    </location>
    <ligand>
        <name>substrate</name>
    </ligand>
</feature>
<feature type="binding site" evidence="1">
    <location>
        <position position="170"/>
    </location>
    <ligand>
        <name>substrate</name>
    </ligand>
</feature>
<feature type="binding site" description="via carbamate group" evidence="1">
    <location>
        <position position="194"/>
    </location>
    <ligand>
        <name>Mg(2+)</name>
        <dbReference type="ChEBI" id="CHEBI:18420"/>
    </ligand>
</feature>
<feature type="binding site" evidence="1">
    <location>
        <position position="196"/>
    </location>
    <ligand>
        <name>Mg(2+)</name>
        <dbReference type="ChEBI" id="CHEBI:18420"/>
    </ligand>
</feature>
<feature type="binding site" evidence="1">
    <location>
        <position position="197"/>
    </location>
    <ligand>
        <name>Mg(2+)</name>
        <dbReference type="ChEBI" id="CHEBI:18420"/>
    </ligand>
</feature>
<feature type="binding site" evidence="1">
    <location>
        <position position="288"/>
    </location>
    <ligand>
        <name>substrate</name>
    </ligand>
</feature>
<feature type="binding site" evidence="1">
    <location>
        <position position="320"/>
    </location>
    <ligand>
        <name>substrate</name>
    </ligand>
</feature>
<feature type="binding site" evidence="1">
    <location>
        <position position="372"/>
    </location>
    <ligand>
        <name>substrate</name>
    </ligand>
</feature>
<feature type="site" description="Transition state stabilizer" evidence="1">
    <location>
        <position position="327"/>
    </location>
</feature>
<feature type="modified residue" description="N6-carboxylysine" evidence="1">
    <location>
        <position position="194"/>
    </location>
</feature>
<organism>
    <name type="scientific">Nitrosomonas europaea (strain ATCC 19718 / CIP 103999 / KCTC 2705 / NBRC 14298)</name>
    <dbReference type="NCBI Taxonomy" id="228410"/>
    <lineage>
        <taxon>Bacteria</taxon>
        <taxon>Pseudomonadati</taxon>
        <taxon>Pseudomonadota</taxon>
        <taxon>Betaproteobacteria</taxon>
        <taxon>Nitrosomonadales</taxon>
        <taxon>Nitrosomonadaceae</taxon>
        <taxon>Nitrosomonas</taxon>
    </lineage>
</organism>
<reference key="1">
    <citation type="journal article" date="2003" name="J. Bacteriol.">
        <title>Complete genome sequence of the ammonia-oxidizing bacterium and obligate chemolithoautotroph Nitrosomonas europaea.</title>
        <authorList>
            <person name="Chain P."/>
            <person name="Lamerdin J.E."/>
            <person name="Larimer F.W."/>
            <person name="Regala W."/>
            <person name="Lao V."/>
            <person name="Land M.L."/>
            <person name="Hauser L."/>
            <person name="Hooper A.B."/>
            <person name="Klotz M.G."/>
            <person name="Norton J."/>
            <person name="Sayavedra-Soto L.A."/>
            <person name="Arciero D.M."/>
            <person name="Hommes N.G."/>
            <person name="Whittaker M.M."/>
            <person name="Arp D.J."/>
        </authorList>
    </citation>
    <scope>NUCLEOTIDE SEQUENCE [LARGE SCALE GENOMIC DNA]</scope>
    <source>
        <strain>ATCC 19718 / CIP 103999 / KCTC 2705 / NBRC 14298</strain>
    </source>
</reference>
<protein>
    <recommendedName>
        <fullName evidence="1">Ribulose bisphosphate carboxylase large chain</fullName>
        <shortName evidence="1">RuBisCO large subunit</shortName>
        <ecNumber evidence="1">4.1.1.39</ecNumber>
    </recommendedName>
</protein>
<comment type="function">
    <text evidence="1">RuBisCO catalyzes two reactions: the carboxylation of D-ribulose 1,5-bisphosphate, the primary event in carbon dioxide fixation, as well as the oxidative fragmentation of the pentose substrate. Both reactions occur simultaneously and in competition at the same active site.</text>
</comment>
<comment type="catalytic activity">
    <reaction evidence="1">
        <text>2 (2R)-3-phosphoglycerate + 2 H(+) = D-ribulose 1,5-bisphosphate + CO2 + H2O</text>
        <dbReference type="Rhea" id="RHEA:23124"/>
        <dbReference type="ChEBI" id="CHEBI:15377"/>
        <dbReference type="ChEBI" id="CHEBI:15378"/>
        <dbReference type="ChEBI" id="CHEBI:16526"/>
        <dbReference type="ChEBI" id="CHEBI:57870"/>
        <dbReference type="ChEBI" id="CHEBI:58272"/>
        <dbReference type="EC" id="4.1.1.39"/>
    </reaction>
</comment>
<comment type="catalytic activity">
    <reaction evidence="1">
        <text>D-ribulose 1,5-bisphosphate + O2 = 2-phosphoglycolate + (2R)-3-phosphoglycerate + 2 H(+)</text>
        <dbReference type="Rhea" id="RHEA:36631"/>
        <dbReference type="ChEBI" id="CHEBI:15378"/>
        <dbReference type="ChEBI" id="CHEBI:15379"/>
        <dbReference type="ChEBI" id="CHEBI:57870"/>
        <dbReference type="ChEBI" id="CHEBI:58033"/>
        <dbReference type="ChEBI" id="CHEBI:58272"/>
    </reaction>
</comment>
<comment type="cofactor">
    <cofactor evidence="1">
        <name>Mg(2+)</name>
        <dbReference type="ChEBI" id="CHEBI:18420"/>
    </cofactor>
    <text evidence="1">Binds 1 Mg(2+) ion per subunit.</text>
</comment>
<comment type="subunit">
    <text evidence="1">Heterohexadecamer of 8 large chains and 8 small chains.</text>
</comment>
<comment type="miscellaneous">
    <text evidence="1">The basic functional RuBisCO is composed of a large chain homodimer in a 'head-to-tail' conformation. In form I RuBisCO this homodimer is arranged in a barrel-like tetramer with the small subunits forming a tetrameric 'cap' on each end of the 'barrel'.</text>
</comment>
<comment type="similarity">
    <text evidence="1">Belongs to the RuBisCO large chain family. Type I subfamily.</text>
</comment>
<accession>Q82TG6</accession>
<keyword id="KW-0113">Calvin cycle</keyword>
<keyword id="KW-0120">Carbon dioxide fixation</keyword>
<keyword id="KW-0456">Lyase</keyword>
<keyword id="KW-0460">Magnesium</keyword>
<keyword id="KW-0479">Metal-binding</keyword>
<keyword id="KW-0503">Monooxygenase</keyword>
<keyword id="KW-0560">Oxidoreductase</keyword>
<keyword id="KW-1185">Reference proteome</keyword>
<dbReference type="EC" id="4.1.1.39" evidence="1"/>
<dbReference type="EMBL" id="AL954747">
    <property type="protein sequence ID" value="CAD85832.1"/>
    <property type="molecule type" value="Genomic_DNA"/>
</dbReference>
<dbReference type="RefSeq" id="WP_011112458.1">
    <property type="nucleotide sequence ID" value="NC_004757.1"/>
</dbReference>
<dbReference type="SMR" id="Q82TG6"/>
<dbReference type="STRING" id="228410.NE1921"/>
<dbReference type="GeneID" id="87105080"/>
<dbReference type="KEGG" id="neu:NE1921"/>
<dbReference type="eggNOG" id="COG1850">
    <property type="taxonomic scope" value="Bacteria"/>
</dbReference>
<dbReference type="HOGENOM" id="CLU_031450_2_0_4"/>
<dbReference type="OrthoDB" id="9770811at2"/>
<dbReference type="PhylomeDB" id="Q82TG6"/>
<dbReference type="Proteomes" id="UP000001416">
    <property type="component" value="Chromosome"/>
</dbReference>
<dbReference type="GO" id="GO:0000287">
    <property type="term" value="F:magnesium ion binding"/>
    <property type="evidence" value="ECO:0007669"/>
    <property type="project" value="UniProtKB-UniRule"/>
</dbReference>
<dbReference type="GO" id="GO:0004497">
    <property type="term" value="F:monooxygenase activity"/>
    <property type="evidence" value="ECO:0007669"/>
    <property type="project" value="UniProtKB-KW"/>
</dbReference>
<dbReference type="GO" id="GO:0016984">
    <property type="term" value="F:ribulose-bisphosphate carboxylase activity"/>
    <property type="evidence" value="ECO:0007669"/>
    <property type="project" value="UniProtKB-UniRule"/>
</dbReference>
<dbReference type="GO" id="GO:0019253">
    <property type="term" value="P:reductive pentose-phosphate cycle"/>
    <property type="evidence" value="ECO:0007669"/>
    <property type="project" value="UniProtKB-UniRule"/>
</dbReference>
<dbReference type="Gene3D" id="3.20.20.110">
    <property type="entry name" value="Ribulose bisphosphate carboxylase, large subunit, C-terminal domain"/>
    <property type="match status" value="1"/>
</dbReference>
<dbReference type="Gene3D" id="3.30.70.150">
    <property type="entry name" value="RuBisCO large subunit, N-terminal domain"/>
    <property type="match status" value="1"/>
</dbReference>
<dbReference type="HAMAP" id="MF_01338">
    <property type="entry name" value="RuBisCO_L_type1"/>
    <property type="match status" value="1"/>
</dbReference>
<dbReference type="InterPro" id="IPR033966">
    <property type="entry name" value="RuBisCO"/>
</dbReference>
<dbReference type="InterPro" id="IPR020878">
    <property type="entry name" value="RuBisCo_large_chain_AS"/>
</dbReference>
<dbReference type="InterPro" id="IPR000685">
    <property type="entry name" value="RuBisCO_lsu_C"/>
</dbReference>
<dbReference type="InterPro" id="IPR036376">
    <property type="entry name" value="RuBisCO_lsu_C_sf"/>
</dbReference>
<dbReference type="InterPro" id="IPR017443">
    <property type="entry name" value="RuBisCO_lsu_fd_N"/>
</dbReference>
<dbReference type="InterPro" id="IPR036422">
    <property type="entry name" value="RuBisCO_lsu_N_sf"/>
</dbReference>
<dbReference type="InterPro" id="IPR020888">
    <property type="entry name" value="RuBisCO_lsuI"/>
</dbReference>
<dbReference type="NCBIfam" id="NF003252">
    <property type="entry name" value="PRK04208.1"/>
    <property type="match status" value="1"/>
</dbReference>
<dbReference type="PANTHER" id="PTHR42704">
    <property type="entry name" value="RIBULOSE BISPHOSPHATE CARBOXYLASE"/>
    <property type="match status" value="1"/>
</dbReference>
<dbReference type="PANTHER" id="PTHR42704:SF17">
    <property type="entry name" value="RIBULOSE BISPHOSPHATE CARBOXYLASE LARGE CHAIN"/>
    <property type="match status" value="1"/>
</dbReference>
<dbReference type="Pfam" id="PF00016">
    <property type="entry name" value="RuBisCO_large"/>
    <property type="match status" value="1"/>
</dbReference>
<dbReference type="Pfam" id="PF02788">
    <property type="entry name" value="RuBisCO_large_N"/>
    <property type="match status" value="1"/>
</dbReference>
<dbReference type="SFLD" id="SFLDG01052">
    <property type="entry name" value="RuBisCO"/>
    <property type="match status" value="1"/>
</dbReference>
<dbReference type="SFLD" id="SFLDS00014">
    <property type="entry name" value="RuBisCO"/>
    <property type="match status" value="1"/>
</dbReference>
<dbReference type="SFLD" id="SFLDG00301">
    <property type="entry name" value="RuBisCO-like_proteins"/>
    <property type="match status" value="1"/>
</dbReference>
<dbReference type="SUPFAM" id="SSF51649">
    <property type="entry name" value="RuBisCo, C-terminal domain"/>
    <property type="match status" value="1"/>
</dbReference>
<dbReference type="SUPFAM" id="SSF54966">
    <property type="entry name" value="RuBisCO, large subunit, small (N-terminal) domain"/>
    <property type="match status" value="1"/>
</dbReference>
<dbReference type="PROSITE" id="PS00157">
    <property type="entry name" value="RUBISCO_LARGE"/>
    <property type="match status" value="1"/>
</dbReference>
<proteinExistence type="inferred from homology"/>